<accession>A6VNE4</accession>
<feature type="chain" id="PRO_1000137862" description="tRNA(Ile)-lysidine synthase">
    <location>
        <begin position="1"/>
        <end position="427"/>
    </location>
</feature>
<feature type="binding site" evidence="1">
    <location>
        <begin position="21"/>
        <end position="26"/>
    </location>
    <ligand>
        <name>ATP</name>
        <dbReference type="ChEBI" id="CHEBI:30616"/>
    </ligand>
</feature>
<name>TILS_ACTSZ</name>
<evidence type="ECO:0000255" key="1">
    <source>
        <dbReference type="HAMAP-Rule" id="MF_01161"/>
    </source>
</evidence>
<organism>
    <name type="scientific">Actinobacillus succinogenes (strain ATCC 55618 / DSM 22257 / CCUG 43843 / 130Z)</name>
    <dbReference type="NCBI Taxonomy" id="339671"/>
    <lineage>
        <taxon>Bacteria</taxon>
        <taxon>Pseudomonadati</taxon>
        <taxon>Pseudomonadota</taxon>
        <taxon>Gammaproteobacteria</taxon>
        <taxon>Pasteurellales</taxon>
        <taxon>Pasteurellaceae</taxon>
        <taxon>Actinobacillus</taxon>
    </lineage>
</organism>
<gene>
    <name evidence="1" type="primary">tilS</name>
    <name type="ordered locus">Asuc_1125</name>
</gene>
<dbReference type="EC" id="6.3.4.19" evidence="1"/>
<dbReference type="EMBL" id="CP000746">
    <property type="protein sequence ID" value="ABR74491.1"/>
    <property type="molecule type" value="Genomic_DNA"/>
</dbReference>
<dbReference type="RefSeq" id="WP_012072868.1">
    <property type="nucleotide sequence ID" value="NC_009655.1"/>
</dbReference>
<dbReference type="SMR" id="A6VNE4"/>
<dbReference type="STRING" id="339671.Asuc_1125"/>
<dbReference type="KEGG" id="asu:Asuc_1125"/>
<dbReference type="eggNOG" id="COG0037">
    <property type="taxonomic scope" value="Bacteria"/>
</dbReference>
<dbReference type="HOGENOM" id="CLU_018869_2_0_6"/>
<dbReference type="OrthoDB" id="9807403at2"/>
<dbReference type="Proteomes" id="UP000001114">
    <property type="component" value="Chromosome"/>
</dbReference>
<dbReference type="GO" id="GO:0005737">
    <property type="term" value="C:cytoplasm"/>
    <property type="evidence" value="ECO:0007669"/>
    <property type="project" value="UniProtKB-SubCell"/>
</dbReference>
<dbReference type="GO" id="GO:0005524">
    <property type="term" value="F:ATP binding"/>
    <property type="evidence" value="ECO:0007669"/>
    <property type="project" value="UniProtKB-UniRule"/>
</dbReference>
<dbReference type="GO" id="GO:0032267">
    <property type="term" value="F:tRNA(Ile)-lysidine synthase activity"/>
    <property type="evidence" value="ECO:0007669"/>
    <property type="project" value="UniProtKB-EC"/>
</dbReference>
<dbReference type="GO" id="GO:0006400">
    <property type="term" value="P:tRNA modification"/>
    <property type="evidence" value="ECO:0007669"/>
    <property type="project" value="UniProtKB-UniRule"/>
</dbReference>
<dbReference type="CDD" id="cd01992">
    <property type="entry name" value="TilS_N"/>
    <property type="match status" value="1"/>
</dbReference>
<dbReference type="Gene3D" id="1.20.59.20">
    <property type="match status" value="1"/>
</dbReference>
<dbReference type="Gene3D" id="3.40.50.620">
    <property type="entry name" value="HUPs"/>
    <property type="match status" value="1"/>
</dbReference>
<dbReference type="HAMAP" id="MF_01161">
    <property type="entry name" value="tRNA_Ile_lys_synt"/>
    <property type="match status" value="1"/>
</dbReference>
<dbReference type="InterPro" id="IPR012796">
    <property type="entry name" value="Lysidine-tRNA-synth_C"/>
</dbReference>
<dbReference type="InterPro" id="IPR014729">
    <property type="entry name" value="Rossmann-like_a/b/a_fold"/>
</dbReference>
<dbReference type="InterPro" id="IPR011063">
    <property type="entry name" value="TilS/TtcA_N"/>
</dbReference>
<dbReference type="InterPro" id="IPR012094">
    <property type="entry name" value="tRNA_Ile_lys_synt"/>
</dbReference>
<dbReference type="InterPro" id="IPR012795">
    <property type="entry name" value="tRNA_Ile_lys_synt_N"/>
</dbReference>
<dbReference type="InterPro" id="IPR015262">
    <property type="entry name" value="tRNA_Ile_lys_synt_subst-bd"/>
</dbReference>
<dbReference type="NCBIfam" id="TIGR02433">
    <property type="entry name" value="lysidine_TilS_C"/>
    <property type="match status" value="1"/>
</dbReference>
<dbReference type="NCBIfam" id="TIGR02432">
    <property type="entry name" value="lysidine_TilS_N"/>
    <property type="match status" value="1"/>
</dbReference>
<dbReference type="PANTHER" id="PTHR43033">
    <property type="entry name" value="TRNA(ILE)-LYSIDINE SYNTHASE-RELATED"/>
    <property type="match status" value="1"/>
</dbReference>
<dbReference type="PANTHER" id="PTHR43033:SF1">
    <property type="entry name" value="TRNA(ILE)-LYSIDINE SYNTHASE-RELATED"/>
    <property type="match status" value="1"/>
</dbReference>
<dbReference type="Pfam" id="PF01171">
    <property type="entry name" value="ATP_bind_3"/>
    <property type="match status" value="1"/>
</dbReference>
<dbReference type="Pfam" id="PF09179">
    <property type="entry name" value="TilS"/>
    <property type="match status" value="1"/>
</dbReference>
<dbReference type="Pfam" id="PF11734">
    <property type="entry name" value="TilS_C"/>
    <property type="match status" value="1"/>
</dbReference>
<dbReference type="SMART" id="SM00977">
    <property type="entry name" value="TilS_C"/>
    <property type="match status" value="1"/>
</dbReference>
<dbReference type="SUPFAM" id="SSF52402">
    <property type="entry name" value="Adenine nucleotide alpha hydrolases-like"/>
    <property type="match status" value="1"/>
</dbReference>
<dbReference type="SUPFAM" id="SSF82829">
    <property type="entry name" value="MesJ substrate recognition domain-like"/>
    <property type="match status" value="1"/>
</dbReference>
<dbReference type="SUPFAM" id="SSF56037">
    <property type="entry name" value="PheT/TilS domain"/>
    <property type="match status" value="1"/>
</dbReference>
<protein>
    <recommendedName>
        <fullName evidence="1">tRNA(Ile)-lysidine synthase</fullName>
        <ecNumber evidence="1">6.3.4.19</ecNumber>
    </recommendedName>
    <alternativeName>
        <fullName evidence="1">tRNA(Ile)-2-lysyl-cytidine synthase</fullName>
    </alternativeName>
    <alternativeName>
        <fullName evidence="1">tRNA(Ile)-lysidine synthetase</fullName>
    </alternativeName>
</protein>
<keyword id="KW-0067">ATP-binding</keyword>
<keyword id="KW-0963">Cytoplasm</keyword>
<keyword id="KW-0436">Ligase</keyword>
<keyword id="KW-0547">Nucleotide-binding</keyword>
<keyword id="KW-1185">Reference proteome</keyword>
<keyword id="KW-0819">tRNA processing</keyword>
<sequence length="427" mass="49556">MSLLSEFQAQLQHSRYLIAFSGGADSTALLALFAKSRQNRPHLQLRAIHIHHGLNVAANDWAAHCRRICEKLEVPLIIERVEINKKSGIEQGAREARYAAIRCHRHADEIVATAHHLQDQTETFLLALKRGSGIKGLGAMQRESRLYGMPIFRPLLPFGKTELENYLRAQSLDWIEDDSNADNRYDRNFLRNRILPVLRRRWTDFDLAVSRSAQHCYEQERLIRELLTPAFEKNYRKTDRTFALSDFAGYSPNKQNALLRMWLTACRVPMPEKMQLAQLIRDVVFAKPDAVPQFVLGEQVIRRYQNRLYLTPHYADVTDFRARLTVNKTVELPDNLGRLHLIKNTKNLTALWQYEDWQYSADFPLGEQQISVGFGYAGKVKLHARDMSRDIKKVWQKYAVPPWRRTRIPLIFVDGKLKSAVGFFDVF</sequence>
<comment type="function">
    <text evidence="1">Ligates lysine onto the cytidine present at position 34 of the AUA codon-specific tRNA(Ile) that contains the anticodon CAU, in an ATP-dependent manner. Cytidine is converted to lysidine, thus changing the amino acid specificity of the tRNA from methionine to isoleucine.</text>
</comment>
<comment type="catalytic activity">
    <reaction evidence="1">
        <text>cytidine(34) in tRNA(Ile2) + L-lysine + ATP = lysidine(34) in tRNA(Ile2) + AMP + diphosphate + H(+)</text>
        <dbReference type="Rhea" id="RHEA:43744"/>
        <dbReference type="Rhea" id="RHEA-COMP:10625"/>
        <dbReference type="Rhea" id="RHEA-COMP:10670"/>
        <dbReference type="ChEBI" id="CHEBI:15378"/>
        <dbReference type="ChEBI" id="CHEBI:30616"/>
        <dbReference type="ChEBI" id="CHEBI:32551"/>
        <dbReference type="ChEBI" id="CHEBI:33019"/>
        <dbReference type="ChEBI" id="CHEBI:82748"/>
        <dbReference type="ChEBI" id="CHEBI:83665"/>
        <dbReference type="ChEBI" id="CHEBI:456215"/>
        <dbReference type="EC" id="6.3.4.19"/>
    </reaction>
</comment>
<comment type="subcellular location">
    <subcellularLocation>
        <location evidence="1">Cytoplasm</location>
    </subcellularLocation>
</comment>
<comment type="domain">
    <text>The N-terminal region contains the highly conserved SGGXDS motif, predicted to be a P-loop motif involved in ATP binding.</text>
</comment>
<comment type="similarity">
    <text evidence="1">Belongs to the tRNA(Ile)-lysidine synthase family.</text>
</comment>
<reference key="1">
    <citation type="journal article" date="2010" name="BMC Genomics">
        <title>A genomic perspective on the potential of Actinobacillus succinogenes for industrial succinate production.</title>
        <authorList>
            <person name="McKinlay J.B."/>
            <person name="Laivenieks M."/>
            <person name="Schindler B.D."/>
            <person name="McKinlay A.A."/>
            <person name="Siddaramappa S."/>
            <person name="Challacombe J.F."/>
            <person name="Lowry S.R."/>
            <person name="Clum A."/>
            <person name="Lapidus A.L."/>
            <person name="Burkhart K.B."/>
            <person name="Harkins V."/>
            <person name="Vieille C."/>
        </authorList>
    </citation>
    <scope>NUCLEOTIDE SEQUENCE [LARGE SCALE GENOMIC DNA]</scope>
    <source>
        <strain>ATCC 55618 / DSM 22257 / CCUG 43843 / 130Z</strain>
    </source>
</reference>
<proteinExistence type="inferred from homology"/>